<keyword id="KW-0963">Cytoplasm</keyword>
<keyword id="KW-0238">DNA-binding</keyword>
<keyword id="KW-0677">Repeat</keyword>
<keyword id="KW-0804">Transcription</keyword>
<keyword id="KW-0805">Transcription regulation</keyword>
<gene>
    <name evidence="1" type="primary">mraZ</name>
    <name type="ordered locus">PputGB1_4521</name>
</gene>
<sequence>MFRGANAVSLDAKGRLAMPSRYRDELDSRCNGQLIVTIDAVDPCLCVYPLDEWEQIEAKLRALPSLREENRRLQRLLIGNAVDLELDGSGRFLVPPRLREYAKLDKKAMLVGQLNKFQLWDEDAWNAVSAADLAAIQQPGAMPDELRDLIL</sequence>
<reference key="1">
    <citation type="submission" date="2008-01" db="EMBL/GenBank/DDBJ databases">
        <title>Complete sequence of Pseudomonas putida GB-1.</title>
        <authorList>
            <consortium name="US DOE Joint Genome Institute"/>
            <person name="Copeland A."/>
            <person name="Lucas S."/>
            <person name="Lapidus A."/>
            <person name="Barry K."/>
            <person name="Glavina del Rio T."/>
            <person name="Dalin E."/>
            <person name="Tice H."/>
            <person name="Pitluck S."/>
            <person name="Bruce D."/>
            <person name="Goodwin L."/>
            <person name="Chertkov O."/>
            <person name="Brettin T."/>
            <person name="Detter J.C."/>
            <person name="Han C."/>
            <person name="Kuske C.R."/>
            <person name="Schmutz J."/>
            <person name="Larimer F."/>
            <person name="Land M."/>
            <person name="Hauser L."/>
            <person name="Kyrpides N."/>
            <person name="Kim E."/>
            <person name="McCarthy J.K."/>
            <person name="Richardson P."/>
        </authorList>
    </citation>
    <scope>NUCLEOTIDE SEQUENCE [LARGE SCALE GENOMIC DNA]</scope>
    <source>
        <strain>GB-1</strain>
    </source>
</reference>
<protein>
    <recommendedName>
        <fullName>Transcriptional regulator MraZ</fullName>
    </recommendedName>
</protein>
<organism>
    <name type="scientific">Pseudomonas putida (strain GB-1)</name>
    <dbReference type="NCBI Taxonomy" id="76869"/>
    <lineage>
        <taxon>Bacteria</taxon>
        <taxon>Pseudomonadati</taxon>
        <taxon>Pseudomonadota</taxon>
        <taxon>Gammaproteobacteria</taxon>
        <taxon>Pseudomonadales</taxon>
        <taxon>Pseudomonadaceae</taxon>
        <taxon>Pseudomonas</taxon>
    </lineage>
</organism>
<feature type="chain" id="PRO_1000084013" description="Transcriptional regulator MraZ">
    <location>
        <begin position="1"/>
        <end position="151"/>
    </location>
</feature>
<feature type="domain" description="SpoVT-AbrB 1" evidence="2">
    <location>
        <begin position="5"/>
        <end position="52"/>
    </location>
</feature>
<feature type="domain" description="SpoVT-AbrB 2" evidence="2">
    <location>
        <begin position="81"/>
        <end position="124"/>
    </location>
</feature>
<accession>B0KFT5</accession>
<proteinExistence type="inferred from homology"/>
<name>MRAZ_PSEPG</name>
<evidence type="ECO:0000255" key="1">
    <source>
        <dbReference type="HAMAP-Rule" id="MF_01008"/>
    </source>
</evidence>
<evidence type="ECO:0000255" key="2">
    <source>
        <dbReference type="PROSITE-ProRule" id="PRU01076"/>
    </source>
</evidence>
<comment type="subunit">
    <text evidence="1">Forms oligomers.</text>
</comment>
<comment type="subcellular location">
    <subcellularLocation>
        <location evidence="1">Cytoplasm</location>
        <location evidence="1">Nucleoid</location>
    </subcellularLocation>
</comment>
<comment type="similarity">
    <text evidence="1">Belongs to the MraZ family.</text>
</comment>
<dbReference type="EMBL" id="CP000926">
    <property type="protein sequence ID" value="ABZ00408.1"/>
    <property type="molecule type" value="Genomic_DNA"/>
</dbReference>
<dbReference type="RefSeq" id="WP_004575120.1">
    <property type="nucleotide sequence ID" value="NC_010322.1"/>
</dbReference>
<dbReference type="SMR" id="B0KFT5"/>
<dbReference type="GeneID" id="97169882"/>
<dbReference type="KEGG" id="ppg:PputGB1_4521"/>
<dbReference type="eggNOG" id="COG2001">
    <property type="taxonomic scope" value="Bacteria"/>
</dbReference>
<dbReference type="HOGENOM" id="CLU_107907_2_0_6"/>
<dbReference type="Proteomes" id="UP000002157">
    <property type="component" value="Chromosome"/>
</dbReference>
<dbReference type="GO" id="GO:0005737">
    <property type="term" value="C:cytoplasm"/>
    <property type="evidence" value="ECO:0007669"/>
    <property type="project" value="UniProtKB-UniRule"/>
</dbReference>
<dbReference type="GO" id="GO:0009295">
    <property type="term" value="C:nucleoid"/>
    <property type="evidence" value="ECO:0007669"/>
    <property type="project" value="UniProtKB-SubCell"/>
</dbReference>
<dbReference type="GO" id="GO:0003700">
    <property type="term" value="F:DNA-binding transcription factor activity"/>
    <property type="evidence" value="ECO:0007669"/>
    <property type="project" value="UniProtKB-UniRule"/>
</dbReference>
<dbReference type="GO" id="GO:0000976">
    <property type="term" value="F:transcription cis-regulatory region binding"/>
    <property type="evidence" value="ECO:0007669"/>
    <property type="project" value="TreeGrafter"/>
</dbReference>
<dbReference type="GO" id="GO:2000143">
    <property type="term" value="P:negative regulation of DNA-templated transcription initiation"/>
    <property type="evidence" value="ECO:0007669"/>
    <property type="project" value="TreeGrafter"/>
</dbReference>
<dbReference type="CDD" id="cd16321">
    <property type="entry name" value="MraZ_C"/>
    <property type="match status" value="1"/>
</dbReference>
<dbReference type="CDD" id="cd16320">
    <property type="entry name" value="MraZ_N"/>
    <property type="match status" value="1"/>
</dbReference>
<dbReference type="Gene3D" id="3.40.1550.20">
    <property type="entry name" value="Transcriptional regulator MraZ domain"/>
    <property type="match status" value="1"/>
</dbReference>
<dbReference type="HAMAP" id="MF_01008">
    <property type="entry name" value="MraZ"/>
    <property type="match status" value="1"/>
</dbReference>
<dbReference type="InterPro" id="IPR003444">
    <property type="entry name" value="MraZ"/>
</dbReference>
<dbReference type="InterPro" id="IPR035644">
    <property type="entry name" value="MraZ_C"/>
</dbReference>
<dbReference type="InterPro" id="IPR020603">
    <property type="entry name" value="MraZ_dom"/>
</dbReference>
<dbReference type="InterPro" id="IPR035642">
    <property type="entry name" value="MraZ_N"/>
</dbReference>
<dbReference type="InterPro" id="IPR038619">
    <property type="entry name" value="MraZ_sf"/>
</dbReference>
<dbReference type="InterPro" id="IPR007159">
    <property type="entry name" value="SpoVT-AbrB_dom"/>
</dbReference>
<dbReference type="InterPro" id="IPR037914">
    <property type="entry name" value="SpoVT-AbrB_sf"/>
</dbReference>
<dbReference type="NCBIfam" id="TIGR00242">
    <property type="entry name" value="division/cell wall cluster transcriptional repressor MraZ"/>
    <property type="match status" value="1"/>
</dbReference>
<dbReference type="PANTHER" id="PTHR34701">
    <property type="entry name" value="TRANSCRIPTIONAL REGULATOR MRAZ"/>
    <property type="match status" value="1"/>
</dbReference>
<dbReference type="PANTHER" id="PTHR34701:SF1">
    <property type="entry name" value="TRANSCRIPTIONAL REGULATOR MRAZ"/>
    <property type="match status" value="1"/>
</dbReference>
<dbReference type="Pfam" id="PF02381">
    <property type="entry name" value="MraZ"/>
    <property type="match status" value="2"/>
</dbReference>
<dbReference type="SUPFAM" id="SSF89447">
    <property type="entry name" value="AbrB/MazE/MraZ-like"/>
    <property type="match status" value="1"/>
</dbReference>
<dbReference type="PROSITE" id="PS51740">
    <property type="entry name" value="SPOVT_ABRB"/>
    <property type="match status" value="2"/>
</dbReference>